<feature type="chain" id="PRO_0000290775" description="Undecaprenyl-diphosphatase">
    <location>
        <begin position="1"/>
        <end position="283"/>
    </location>
</feature>
<feature type="transmembrane region" description="Helical" evidence="1">
    <location>
        <begin position="47"/>
        <end position="67"/>
    </location>
</feature>
<feature type="transmembrane region" description="Helical" evidence="1">
    <location>
        <begin position="94"/>
        <end position="114"/>
    </location>
</feature>
<feature type="transmembrane region" description="Helical" evidence="1">
    <location>
        <begin position="127"/>
        <end position="147"/>
    </location>
</feature>
<feature type="transmembrane region" description="Helical" evidence="1">
    <location>
        <begin position="197"/>
        <end position="217"/>
    </location>
</feature>
<feature type="transmembrane region" description="Helical" evidence="1">
    <location>
        <begin position="227"/>
        <end position="247"/>
    </location>
</feature>
<feature type="transmembrane region" description="Helical" evidence="1">
    <location>
        <begin position="261"/>
        <end position="281"/>
    </location>
</feature>
<sequence length="283" mass="29990">MTPDPGLLEACWRDFVLGVVQGLTEFLPISSTAHLKVVPVLAGWGDPGLSVTAVIQLGSIVAVIAYFRADLAGVLKGISGAFRRGQWREPEARLGIAMLIGTLPILIAGLCIKLYWPGYATSSLRSVPAIAVVSIVMALLLGFAELLGPRLKQLNQVDGRDGLVVGLAQVFSLIPGVSRSGSTLTASLFDGWKRADAARFSFLLGIPAITIAGLVELKDAFSGSSAGGVLPVFVGICSAAVVSWLAIDWLIKYLESHSTRIFVVYRLLFGVLLLVWWSGSASN</sequence>
<accession>Q0I740</accession>
<evidence type="ECO:0000255" key="1">
    <source>
        <dbReference type="HAMAP-Rule" id="MF_01006"/>
    </source>
</evidence>
<dbReference type="EC" id="3.6.1.27" evidence="1"/>
<dbReference type="EMBL" id="CP000435">
    <property type="protein sequence ID" value="ABI46329.1"/>
    <property type="molecule type" value="Genomic_DNA"/>
</dbReference>
<dbReference type="RefSeq" id="WP_011620437.1">
    <property type="nucleotide sequence ID" value="NC_008319.1"/>
</dbReference>
<dbReference type="SMR" id="Q0I740"/>
<dbReference type="STRING" id="64471.sync_2543"/>
<dbReference type="KEGG" id="syg:sync_2543"/>
<dbReference type="eggNOG" id="COG1968">
    <property type="taxonomic scope" value="Bacteria"/>
</dbReference>
<dbReference type="HOGENOM" id="CLU_060296_1_0_3"/>
<dbReference type="OrthoDB" id="9808289at2"/>
<dbReference type="Proteomes" id="UP000001961">
    <property type="component" value="Chromosome"/>
</dbReference>
<dbReference type="GO" id="GO:0005886">
    <property type="term" value="C:plasma membrane"/>
    <property type="evidence" value="ECO:0007669"/>
    <property type="project" value="UniProtKB-SubCell"/>
</dbReference>
<dbReference type="GO" id="GO:0050380">
    <property type="term" value="F:undecaprenyl-diphosphatase activity"/>
    <property type="evidence" value="ECO:0007669"/>
    <property type="project" value="UniProtKB-UniRule"/>
</dbReference>
<dbReference type="GO" id="GO:0071555">
    <property type="term" value="P:cell wall organization"/>
    <property type="evidence" value="ECO:0007669"/>
    <property type="project" value="UniProtKB-KW"/>
</dbReference>
<dbReference type="GO" id="GO:0009252">
    <property type="term" value="P:peptidoglycan biosynthetic process"/>
    <property type="evidence" value="ECO:0007669"/>
    <property type="project" value="UniProtKB-KW"/>
</dbReference>
<dbReference type="GO" id="GO:0008360">
    <property type="term" value="P:regulation of cell shape"/>
    <property type="evidence" value="ECO:0007669"/>
    <property type="project" value="UniProtKB-KW"/>
</dbReference>
<dbReference type="GO" id="GO:0046677">
    <property type="term" value="P:response to antibiotic"/>
    <property type="evidence" value="ECO:0007669"/>
    <property type="project" value="UniProtKB-UniRule"/>
</dbReference>
<dbReference type="HAMAP" id="MF_01006">
    <property type="entry name" value="Undec_diphosphatase"/>
    <property type="match status" value="1"/>
</dbReference>
<dbReference type="InterPro" id="IPR003824">
    <property type="entry name" value="UppP"/>
</dbReference>
<dbReference type="NCBIfam" id="NF001394">
    <property type="entry name" value="PRK00281.2-5"/>
    <property type="match status" value="1"/>
</dbReference>
<dbReference type="NCBIfam" id="TIGR00753">
    <property type="entry name" value="undec_PP_bacA"/>
    <property type="match status" value="1"/>
</dbReference>
<dbReference type="PANTHER" id="PTHR30622">
    <property type="entry name" value="UNDECAPRENYL-DIPHOSPHATASE"/>
    <property type="match status" value="1"/>
</dbReference>
<dbReference type="PANTHER" id="PTHR30622:SF4">
    <property type="entry name" value="UNDECAPRENYL-DIPHOSPHATASE"/>
    <property type="match status" value="1"/>
</dbReference>
<dbReference type="Pfam" id="PF02673">
    <property type="entry name" value="BacA"/>
    <property type="match status" value="1"/>
</dbReference>
<proteinExistence type="inferred from homology"/>
<organism>
    <name type="scientific">Synechococcus sp. (strain CC9311)</name>
    <dbReference type="NCBI Taxonomy" id="64471"/>
    <lineage>
        <taxon>Bacteria</taxon>
        <taxon>Bacillati</taxon>
        <taxon>Cyanobacteriota</taxon>
        <taxon>Cyanophyceae</taxon>
        <taxon>Synechococcales</taxon>
        <taxon>Synechococcaceae</taxon>
        <taxon>Synechococcus</taxon>
    </lineage>
</organism>
<keyword id="KW-0046">Antibiotic resistance</keyword>
<keyword id="KW-0997">Cell inner membrane</keyword>
<keyword id="KW-1003">Cell membrane</keyword>
<keyword id="KW-0133">Cell shape</keyword>
<keyword id="KW-0961">Cell wall biogenesis/degradation</keyword>
<keyword id="KW-0378">Hydrolase</keyword>
<keyword id="KW-0472">Membrane</keyword>
<keyword id="KW-0573">Peptidoglycan synthesis</keyword>
<keyword id="KW-1185">Reference proteome</keyword>
<keyword id="KW-0812">Transmembrane</keyword>
<keyword id="KW-1133">Transmembrane helix</keyword>
<reference key="1">
    <citation type="journal article" date="2006" name="Proc. Natl. Acad. Sci. U.S.A.">
        <title>Genome sequence of Synechococcus CC9311: insights into adaptation to a coastal environment.</title>
        <authorList>
            <person name="Palenik B."/>
            <person name="Ren Q."/>
            <person name="Dupont C.L."/>
            <person name="Myers G.S."/>
            <person name="Heidelberg J.F."/>
            <person name="Badger J.H."/>
            <person name="Madupu R."/>
            <person name="Nelson W.C."/>
            <person name="Brinkac L.M."/>
            <person name="Dodson R.J."/>
            <person name="Durkin A.S."/>
            <person name="Daugherty S.C."/>
            <person name="Sullivan S.A."/>
            <person name="Khouri H."/>
            <person name="Mohamoud Y."/>
            <person name="Halpin R."/>
            <person name="Paulsen I.T."/>
        </authorList>
    </citation>
    <scope>NUCLEOTIDE SEQUENCE [LARGE SCALE GENOMIC DNA]</scope>
    <source>
        <strain>CC9311</strain>
    </source>
</reference>
<gene>
    <name evidence="1" type="primary">uppP</name>
    <name type="ordered locus">sync_2543</name>
</gene>
<comment type="function">
    <text evidence="1">Catalyzes the dephosphorylation of undecaprenyl diphosphate (UPP). Confers resistance to bacitracin.</text>
</comment>
<comment type="catalytic activity">
    <reaction evidence="1">
        <text>di-trans,octa-cis-undecaprenyl diphosphate + H2O = di-trans,octa-cis-undecaprenyl phosphate + phosphate + H(+)</text>
        <dbReference type="Rhea" id="RHEA:28094"/>
        <dbReference type="ChEBI" id="CHEBI:15377"/>
        <dbReference type="ChEBI" id="CHEBI:15378"/>
        <dbReference type="ChEBI" id="CHEBI:43474"/>
        <dbReference type="ChEBI" id="CHEBI:58405"/>
        <dbReference type="ChEBI" id="CHEBI:60392"/>
        <dbReference type="EC" id="3.6.1.27"/>
    </reaction>
</comment>
<comment type="subcellular location">
    <subcellularLocation>
        <location evidence="1">Cell inner membrane</location>
        <topology evidence="1">Multi-pass membrane protein</topology>
    </subcellularLocation>
</comment>
<comment type="miscellaneous">
    <text>Bacitracin is thought to be involved in the inhibition of peptidoglycan synthesis by sequestering undecaprenyl diphosphate, thereby reducing the pool of lipid carrier available.</text>
</comment>
<comment type="similarity">
    <text evidence="1">Belongs to the UppP family.</text>
</comment>
<name>UPPP_SYNS3</name>
<protein>
    <recommendedName>
        <fullName evidence="1">Undecaprenyl-diphosphatase</fullName>
        <ecNumber evidence="1">3.6.1.27</ecNumber>
    </recommendedName>
    <alternativeName>
        <fullName evidence="1">Bacitracin resistance protein</fullName>
    </alternativeName>
    <alternativeName>
        <fullName evidence="1">Undecaprenyl pyrophosphate phosphatase</fullName>
    </alternativeName>
</protein>